<name>ISPH_GEOMG</name>
<reference key="1">
    <citation type="journal article" date="2009" name="BMC Microbiol.">
        <title>The genome sequence of Geobacter metallireducens: features of metabolism, physiology and regulation common and dissimilar to Geobacter sulfurreducens.</title>
        <authorList>
            <person name="Aklujkar M."/>
            <person name="Krushkal J."/>
            <person name="DiBartolo G."/>
            <person name="Lapidus A."/>
            <person name="Land M.L."/>
            <person name="Lovley D.R."/>
        </authorList>
    </citation>
    <scope>NUCLEOTIDE SEQUENCE [LARGE SCALE GENOMIC DNA]</scope>
    <source>
        <strain>ATCC 53774 / DSM 7210 / GS-15</strain>
    </source>
</reference>
<organism>
    <name type="scientific">Geobacter metallireducens (strain ATCC 53774 / DSM 7210 / GS-15)</name>
    <dbReference type="NCBI Taxonomy" id="269799"/>
    <lineage>
        <taxon>Bacteria</taxon>
        <taxon>Pseudomonadati</taxon>
        <taxon>Thermodesulfobacteriota</taxon>
        <taxon>Desulfuromonadia</taxon>
        <taxon>Geobacterales</taxon>
        <taxon>Geobacteraceae</taxon>
        <taxon>Geobacter</taxon>
    </lineage>
</organism>
<feature type="chain" id="PRO_1000021126" description="4-hydroxy-3-methylbut-2-enyl diphosphate reductase">
    <location>
        <begin position="1"/>
        <end position="282"/>
    </location>
</feature>
<feature type="active site" description="Proton donor" evidence="1">
    <location>
        <position position="124"/>
    </location>
</feature>
<feature type="binding site" evidence="1">
    <location>
        <position position="12"/>
    </location>
    <ligand>
        <name>[4Fe-4S] cluster</name>
        <dbReference type="ChEBI" id="CHEBI:49883"/>
    </ligand>
</feature>
<feature type="binding site" evidence="1">
    <location>
        <position position="40"/>
    </location>
    <ligand>
        <name>(2E)-4-hydroxy-3-methylbut-2-enyl diphosphate</name>
        <dbReference type="ChEBI" id="CHEBI:128753"/>
    </ligand>
</feature>
<feature type="binding site" evidence="1">
    <location>
        <position position="40"/>
    </location>
    <ligand>
        <name>dimethylallyl diphosphate</name>
        <dbReference type="ChEBI" id="CHEBI:57623"/>
    </ligand>
</feature>
<feature type="binding site" evidence="1">
    <location>
        <position position="40"/>
    </location>
    <ligand>
        <name>isopentenyl diphosphate</name>
        <dbReference type="ChEBI" id="CHEBI:128769"/>
    </ligand>
</feature>
<feature type="binding site" evidence="1">
    <location>
        <position position="72"/>
    </location>
    <ligand>
        <name>(2E)-4-hydroxy-3-methylbut-2-enyl diphosphate</name>
        <dbReference type="ChEBI" id="CHEBI:128753"/>
    </ligand>
</feature>
<feature type="binding site" evidence="1">
    <location>
        <position position="72"/>
    </location>
    <ligand>
        <name>dimethylallyl diphosphate</name>
        <dbReference type="ChEBI" id="CHEBI:57623"/>
    </ligand>
</feature>
<feature type="binding site" evidence="1">
    <location>
        <position position="72"/>
    </location>
    <ligand>
        <name>isopentenyl diphosphate</name>
        <dbReference type="ChEBI" id="CHEBI:128769"/>
    </ligand>
</feature>
<feature type="binding site" evidence="1">
    <location>
        <position position="94"/>
    </location>
    <ligand>
        <name>[4Fe-4S] cluster</name>
        <dbReference type="ChEBI" id="CHEBI:49883"/>
    </ligand>
</feature>
<feature type="binding site" evidence="1">
    <location>
        <position position="122"/>
    </location>
    <ligand>
        <name>(2E)-4-hydroxy-3-methylbut-2-enyl diphosphate</name>
        <dbReference type="ChEBI" id="CHEBI:128753"/>
    </ligand>
</feature>
<feature type="binding site" evidence="1">
    <location>
        <position position="122"/>
    </location>
    <ligand>
        <name>dimethylallyl diphosphate</name>
        <dbReference type="ChEBI" id="CHEBI:57623"/>
    </ligand>
</feature>
<feature type="binding site" evidence="1">
    <location>
        <position position="122"/>
    </location>
    <ligand>
        <name>isopentenyl diphosphate</name>
        <dbReference type="ChEBI" id="CHEBI:128769"/>
    </ligand>
</feature>
<feature type="binding site" evidence="1">
    <location>
        <position position="160"/>
    </location>
    <ligand>
        <name>(2E)-4-hydroxy-3-methylbut-2-enyl diphosphate</name>
        <dbReference type="ChEBI" id="CHEBI:128753"/>
    </ligand>
</feature>
<feature type="binding site" evidence="1">
    <location>
        <position position="188"/>
    </location>
    <ligand>
        <name>[4Fe-4S] cluster</name>
        <dbReference type="ChEBI" id="CHEBI:49883"/>
    </ligand>
</feature>
<feature type="binding site" evidence="1">
    <location>
        <position position="216"/>
    </location>
    <ligand>
        <name>(2E)-4-hydroxy-3-methylbut-2-enyl diphosphate</name>
        <dbReference type="ChEBI" id="CHEBI:128753"/>
    </ligand>
</feature>
<feature type="binding site" evidence="1">
    <location>
        <position position="216"/>
    </location>
    <ligand>
        <name>dimethylallyl diphosphate</name>
        <dbReference type="ChEBI" id="CHEBI:57623"/>
    </ligand>
</feature>
<feature type="binding site" evidence="1">
    <location>
        <position position="216"/>
    </location>
    <ligand>
        <name>isopentenyl diphosphate</name>
        <dbReference type="ChEBI" id="CHEBI:128769"/>
    </ligand>
</feature>
<feature type="binding site" evidence="1">
    <location>
        <position position="218"/>
    </location>
    <ligand>
        <name>(2E)-4-hydroxy-3-methylbut-2-enyl diphosphate</name>
        <dbReference type="ChEBI" id="CHEBI:128753"/>
    </ligand>
</feature>
<feature type="binding site" evidence="1">
    <location>
        <position position="218"/>
    </location>
    <ligand>
        <name>dimethylallyl diphosphate</name>
        <dbReference type="ChEBI" id="CHEBI:57623"/>
    </ligand>
</feature>
<feature type="binding site" evidence="1">
    <location>
        <position position="218"/>
    </location>
    <ligand>
        <name>isopentenyl diphosphate</name>
        <dbReference type="ChEBI" id="CHEBI:128769"/>
    </ligand>
</feature>
<feature type="binding site" evidence="1">
    <location>
        <position position="260"/>
    </location>
    <ligand>
        <name>(2E)-4-hydroxy-3-methylbut-2-enyl diphosphate</name>
        <dbReference type="ChEBI" id="CHEBI:128753"/>
    </ligand>
</feature>
<feature type="binding site" evidence="1">
    <location>
        <position position="260"/>
    </location>
    <ligand>
        <name>dimethylallyl diphosphate</name>
        <dbReference type="ChEBI" id="CHEBI:57623"/>
    </ligand>
</feature>
<feature type="binding site" evidence="1">
    <location>
        <position position="260"/>
    </location>
    <ligand>
        <name>isopentenyl diphosphate</name>
        <dbReference type="ChEBI" id="CHEBI:128769"/>
    </ligand>
</feature>
<accession>Q39XB6</accession>
<keyword id="KW-0004">4Fe-4S</keyword>
<keyword id="KW-0408">Iron</keyword>
<keyword id="KW-0411">Iron-sulfur</keyword>
<keyword id="KW-0414">Isoprene biosynthesis</keyword>
<keyword id="KW-0479">Metal-binding</keyword>
<keyword id="KW-0560">Oxidoreductase</keyword>
<keyword id="KW-1185">Reference proteome</keyword>
<dbReference type="EC" id="1.17.7.4" evidence="1"/>
<dbReference type="EMBL" id="CP000148">
    <property type="protein sequence ID" value="ABB31108.1"/>
    <property type="molecule type" value="Genomic_DNA"/>
</dbReference>
<dbReference type="RefSeq" id="WP_004513012.1">
    <property type="nucleotide sequence ID" value="NC_007517.1"/>
</dbReference>
<dbReference type="SMR" id="Q39XB6"/>
<dbReference type="STRING" id="269799.Gmet_0866"/>
<dbReference type="KEGG" id="gme:Gmet_0866"/>
<dbReference type="eggNOG" id="COG0761">
    <property type="taxonomic scope" value="Bacteria"/>
</dbReference>
<dbReference type="HOGENOM" id="CLU_027486_0_1_7"/>
<dbReference type="UniPathway" id="UPA00056">
    <property type="reaction ID" value="UER00097"/>
</dbReference>
<dbReference type="UniPathway" id="UPA00059">
    <property type="reaction ID" value="UER00105"/>
</dbReference>
<dbReference type="Proteomes" id="UP000007073">
    <property type="component" value="Chromosome"/>
</dbReference>
<dbReference type="GO" id="GO:0051539">
    <property type="term" value="F:4 iron, 4 sulfur cluster binding"/>
    <property type="evidence" value="ECO:0007669"/>
    <property type="project" value="UniProtKB-UniRule"/>
</dbReference>
<dbReference type="GO" id="GO:0051745">
    <property type="term" value="F:4-hydroxy-3-methylbut-2-enyl diphosphate reductase activity"/>
    <property type="evidence" value="ECO:0007669"/>
    <property type="project" value="UniProtKB-UniRule"/>
</dbReference>
<dbReference type="GO" id="GO:0046872">
    <property type="term" value="F:metal ion binding"/>
    <property type="evidence" value="ECO:0007669"/>
    <property type="project" value="UniProtKB-KW"/>
</dbReference>
<dbReference type="GO" id="GO:0050992">
    <property type="term" value="P:dimethylallyl diphosphate biosynthetic process"/>
    <property type="evidence" value="ECO:0007669"/>
    <property type="project" value="UniProtKB-UniRule"/>
</dbReference>
<dbReference type="GO" id="GO:0019288">
    <property type="term" value="P:isopentenyl diphosphate biosynthetic process, methylerythritol 4-phosphate pathway"/>
    <property type="evidence" value="ECO:0007669"/>
    <property type="project" value="UniProtKB-UniRule"/>
</dbReference>
<dbReference type="GO" id="GO:0016114">
    <property type="term" value="P:terpenoid biosynthetic process"/>
    <property type="evidence" value="ECO:0007669"/>
    <property type="project" value="UniProtKB-UniRule"/>
</dbReference>
<dbReference type="CDD" id="cd13944">
    <property type="entry name" value="lytB_ispH"/>
    <property type="match status" value="1"/>
</dbReference>
<dbReference type="Gene3D" id="3.40.50.11270">
    <property type="match status" value="1"/>
</dbReference>
<dbReference type="Gene3D" id="3.40.1010.20">
    <property type="entry name" value="4-hydroxy-3-methylbut-2-enyl diphosphate reductase, catalytic domain"/>
    <property type="match status" value="2"/>
</dbReference>
<dbReference type="HAMAP" id="MF_00191">
    <property type="entry name" value="IspH"/>
    <property type="match status" value="1"/>
</dbReference>
<dbReference type="InterPro" id="IPR003451">
    <property type="entry name" value="LytB/IspH"/>
</dbReference>
<dbReference type="NCBIfam" id="TIGR00216">
    <property type="entry name" value="ispH_lytB"/>
    <property type="match status" value="1"/>
</dbReference>
<dbReference type="NCBIfam" id="NF002187">
    <property type="entry name" value="PRK01045.1-1"/>
    <property type="match status" value="1"/>
</dbReference>
<dbReference type="PANTHER" id="PTHR30426">
    <property type="entry name" value="4-HYDROXY-3-METHYLBUT-2-ENYL DIPHOSPHATE REDUCTASE"/>
    <property type="match status" value="1"/>
</dbReference>
<dbReference type="PANTHER" id="PTHR30426:SF0">
    <property type="entry name" value="4-HYDROXY-3-METHYLBUT-2-ENYL DIPHOSPHATE REDUCTASE"/>
    <property type="match status" value="1"/>
</dbReference>
<dbReference type="Pfam" id="PF02401">
    <property type="entry name" value="LYTB"/>
    <property type="match status" value="1"/>
</dbReference>
<evidence type="ECO:0000255" key="1">
    <source>
        <dbReference type="HAMAP-Rule" id="MF_00191"/>
    </source>
</evidence>
<protein>
    <recommendedName>
        <fullName evidence="1">4-hydroxy-3-methylbut-2-enyl diphosphate reductase</fullName>
        <shortName evidence="1">HMBPP reductase</shortName>
        <ecNumber evidence="1">1.17.7.4</ecNumber>
    </recommendedName>
</protein>
<proteinExistence type="inferred from homology"/>
<gene>
    <name evidence="1" type="primary">ispH</name>
    <name type="ordered locus">Gmet_0866</name>
</gene>
<comment type="function">
    <text evidence="1">Catalyzes the conversion of 1-hydroxy-2-methyl-2-(E)-butenyl 4-diphosphate (HMBPP) into a mixture of isopentenyl diphosphate (IPP) and dimethylallyl diphosphate (DMAPP). Acts in the terminal step of the DOXP/MEP pathway for isoprenoid precursor biosynthesis.</text>
</comment>
<comment type="catalytic activity">
    <reaction evidence="1">
        <text>isopentenyl diphosphate + 2 oxidized [2Fe-2S]-[ferredoxin] + H2O = (2E)-4-hydroxy-3-methylbut-2-enyl diphosphate + 2 reduced [2Fe-2S]-[ferredoxin] + 2 H(+)</text>
        <dbReference type="Rhea" id="RHEA:24488"/>
        <dbReference type="Rhea" id="RHEA-COMP:10000"/>
        <dbReference type="Rhea" id="RHEA-COMP:10001"/>
        <dbReference type="ChEBI" id="CHEBI:15377"/>
        <dbReference type="ChEBI" id="CHEBI:15378"/>
        <dbReference type="ChEBI" id="CHEBI:33737"/>
        <dbReference type="ChEBI" id="CHEBI:33738"/>
        <dbReference type="ChEBI" id="CHEBI:128753"/>
        <dbReference type="ChEBI" id="CHEBI:128769"/>
        <dbReference type="EC" id="1.17.7.4"/>
    </reaction>
</comment>
<comment type="catalytic activity">
    <reaction evidence="1">
        <text>dimethylallyl diphosphate + 2 oxidized [2Fe-2S]-[ferredoxin] + H2O = (2E)-4-hydroxy-3-methylbut-2-enyl diphosphate + 2 reduced [2Fe-2S]-[ferredoxin] + 2 H(+)</text>
        <dbReference type="Rhea" id="RHEA:24825"/>
        <dbReference type="Rhea" id="RHEA-COMP:10000"/>
        <dbReference type="Rhea" id="RHEA-COMP:10001"/>
        <dbReference type="ChEBI" id="CHEBI:15377"/>
        <dbReference type="ChEBI" id="CHEBI:15378"/>
        <dbReference type="ChEBI" id="CHEBI:33737"/>
        <dbReference type="ChEBI" id="CHEBI:33738"/>
        <dbReference type="ChEBI" id="CHEBI:57623"/>
        <dbReference type="ChEBI" id="CHEBI:128753"/>
        <dbReference type="EC" id="1.17.7.4"/>
    </reaction>
</comment>
<comment type="cofactor">
    <cofactor evidence="1">
        <name>[4Fe-4S] cluster</name>
        <dbReference type="ChEBI" id="CHEBI:49883"/>
    </cofactor>
    <text evidence="1">Binds 1 [4Fe-4S] cluster per subunit.</text>
</comment>
<comment type="pathway">
    <text evidence="1">Isoprenoid biosynthesis; dimethylallyl diphosphate biosynthesis; dimethylallyl diphosphate from (2E)-4-hydroxy-3-methylbutenyl diphosphate: step 1/1.</text>
</comment>
<comment type="pathway">
    <text evidence="1">Isoprenoid biosynthesis; isopentenyl diphosphate biosynthesis via DXP pathway; isopentenyl diphosphate from 1-deoxy-D-xylulose 5-phosphate: step 6/6.</text>
</comment>
<comment type="similarity">
    <text evidence="1">Belongs to the IspH family.</text>
</comment>
<sequence length="282" mass="30730">MEIILAKRAGFCFGVKRATQMAFEAAEKEGKTYSLGPIIHSPQVVHRLEEMGVKVLKGLGEITDGTIIVRSHGVTSEELEEAVRKELEVVDATCPFVKKAQENVQNLSEAGYEVVVVGDADHPEVQGIVSYAKGKVCVVGSEEEAARLPKMKKIGIVAQTTQSFDNLKHVVLECLRKGAEIRIFNTICDATAVRQQEATALARTVDCMIVIGGYNSANTKRLAEVCAELQPRTHQIETAQEINPAWFEGVAKVGVTAGASTPKWLIDEVIERIREIDSAKTS</sequence>